<accession>Q11DQ8</accession>
<protein>
    <recommendedName>
        <fullName evidence="1">Chaperonin GroEL 2</fullName>
        <ecNumber evidence="1">5.6.1.7</ecNumber>
    </recommendedName>
    <alternativeName>
        <fullName evidence="1">60 kDa chaperonin 2</fullName>
    </alternativeName>
    <alternativeName>
        <fullName evidence="1">Chaperonin-60 2</fullName>
        <shortName evidence="1">Cpn60 2</shortName>
    </alternativeName>
</protein>
<dbReference type="EC" id="5.6.1.7" evidence="1"/>
<dbReference type="EMBL" id="CP000390">
    <property type="protein sequence ID" value="ABG64467.1"/>
    <property type="molecule type" value="Genomic_DNA"/>
</dbReference>
<dbReference type="SMR" id="Q11DQ8"/>
<dbReference type="STRING" id="266779.Meso_3095"/>
<dbReference type="KEGG" id="mes:Meso_3095"/>
<dbReference type="eggNOG" id="COG0459">
    <property type="taxonomic scope" value="Bacteria"/>
</dbReference>
<dbReference type="HOGENOM" id="CLU_016503_3_0_5"/>
<dbReference type="OrthoDB" id="9766614at2"/>
<dbReference type="GO" id="GO:0005737">
    <property type="term" value="C:cytoplasm"/>
    <property type="evidence" value="ECO:0007669"/>
    <property type="project" value="UniProtKB-SubCell"/>
</dbReference>
<dbReference type="GO" id="GO:0005524">
    <property type="term" value="F:ATP binding"/>
    <property type="evidence" value="ECO:0007669"/>
    <property type="project" value="UniProtKB-UniRule"/>
</dbReference>
<dbReference type="GO" id="GO:0140662">
    <property type="term" value="F:ATP-dependent protein folding chaperone"/>
    <property type="evidence" value="ECO:0007669"/>
    <property type="project" value="InterPro"/>
</dbReference>
<dbReference type="GO" id="GO:0016853">
    <property type="term" value="F:isomerase activity"/>
    <property type="evidence" value="ECO:0007669"/>
    <property type="project" value="UniProtKB-KW"/>
</dbReference>
<dbReference type="GO" id="GO:0051082">
    <property type="term" value="F:unfolded protein binding"/>
    <property type="evidence" value="ECO:0007669"/>
    <property type="project" value="UniProtKB-UniRule"/>
</dbReference>
<dbReference type="GO" id="GO:0042026">
    <property type="term" value="P:protein refolding"/>
    <property type="evidence" value="ECO:0007669"/>
    <property type="project" value="UniProtKB-UniRule"/>
</dbReference>
<dbReference type="CDD" id="cd03344">
    <property type="entry name" value="GroEL"/>
    <property type="match status" value="1"/>
</dbReference>
<dbReference type="FunFam" id="1.10.560.10:FF:000001">
    <property type="entry name" value="60 kDa chaperonin"/>
    <property type="match status" value="1"/>
</dbReference>
<dbReference type="FunFam" id="3.50.7.10:FF:000001">
    <property type="entry name" value="60 kDa chaperonin"/>
    <property type="match status" value="1"/>
</dbReference>
<dbReference type="Gene3D" id="3.50.7.10">
    <property type="entry name" value="GroEL"/>
    <property type="match status" value="1"/>
</dbReference>
<dbReference type="Gene3D" id="1.10.560.10">
    <property type="entry name" value="GroEL-like equatorial domain"/>
    <property type="match status" value="1"/>
</dbReference>
<dbReference type="Gene3D" id="3.30.260.10">
    <property type="entry name" value="TCP-1-like chaperonin intermediate domain"/>
    <property type="match status" value="1"/>
</dbReference>
<dbReference type="HAMAP" id="MF_00600">
    <property type="entry name" value="CH60"/>
    <property type="match status" value="1"/>
</dbReference>
<dbReference type="InterPro" id="IPR018370">
    <property type="entry name" value="Chaperonin_Cpn60_CS"/>
</dbReference>
<dbReference type="InterPro" id="IPR001844">
    <property type="entry name" value="Cpn60/GroEL"/>
</dbReference>
<dbReference type="InterPro" id="IPR002423">
    <property type="entry name" value="Cpn60/GroEL/TCP-1"/>
</dbReference>
<dbReference type="InterPro" id="IPR027409">
    <property type="entry name" value="GroEL-like_apical_dom_sf"/>
</dbReference>
<dbReference type="InterPro" id="IPR027413">
    <property type="entry name" value="GROEL-like_equatorial_sf"/>
</dbReference>
<dbReference type="InterPro" id="IPR027410">
    <property type="entry name" value="TCP-1-like_intermed_sf"/>
</dbReference>
<dbReference type="NCBIfam" id="TIGR02348">
    <property type="entry name" value="GroEL"/>
    <property type="match status" value="1"/>
</dbReference>
<dbReference type="NCBIfam" id="NF000592">
    <property type="entry name" value="PRK00013.1"/>
    <property type="match status" value="1"/>
</dbReference>
<dbReference type="NCBIfam" id="NF009487">
    <property type="entry name" value="PRK12849.1"/>
    <property type="match status" value="1"/>
</dbReference>
<dbReference type="NCBIfam" id="NF009488">
    <property type="entry name" value="PRK12850.1"/>
    <property type="match status" value="1"/>
</dbReference>
<dbReference type="NCBIfam" id="NF009489">
    <property type="entry name" value="PRK12851.1"/>
    <property type="match status" value="1"/>
</dbReference>
<dbReference type="PANTHER" id="PTHR45633">
    <property type="entry name" value="60 KDA HEAT SHOCK PROTEIN, MITOCHONDRIAL"/>
    <property type="match status" value="1"/>
</dbReference>
<dbReference type="Pfam" id="PF00118">
    <property type="entry name" value="Cpn60_TCP1"/>
    <property type="match status" value="1"/>
</dbReference>
<dbReference type="PRINTS" id="PR00298">
    <property type="entry name" value="CHAPERONIN60"/>
</dbReference>
<dbReference type="SUPFAM" id="SSF52029">
    <property type="entry name" value="GroEL apical domain-like"/>
    <property type="match status" value="1"/>
</dbReference>
<dbReference type="SUPFAM" id="SSF48592">
    <property type="entry name" value="GroEL equatorial domain-like"/>
    <property type="match status" value="1"/>
</dbReference>
<dbReference type="SUPFAM" id="SSF54849">
    <property type="entry name" value="GroEL-intermediate domain like"/>
    <property type="match status" value="1"/>
</dbReference>
<dbReference type="PROSITE" id="PS00296">
    <property type="entry name" value="CHAPERONINS_CPN60"/>
    <property type="match status" value="1"/>
</dbReference>
<gene>
    <name evidence="1" type="primary">groEL2</name>
    <name evidence="1" type="synonym">groL2</name>
    <name type="ordered locus">Meso_3095</name>
</gene>
<reference key="1">
    <citation type="submission" date="2006-06" db="EMBL/GenBank/DDBJ databases">
        <title>Complete sequence of chromosome of Mesorhizobium sp. BNC1.</title>
        <authorList>
            <consortium name="US DOE Joint Genome Institute"/>
            <person name="Copeland A."/>
            <person name="Lucas S."/>
            <person name="Lapidus A."/>
            <person name="Barry K."/>
            <person name="Detter J.C."/>
            <person name="Glavina del Rio T."/>
            <person name="Hammon N."/>
            <person name="Israni S."/>
            <person name="Dalin E."/>
            <person name="Tice H."/>
            <person name="Pitluck S."/>
            <person name="Chertkov O."/>
            <person name="Brettin T."/>
            <person name="Bruce D."/>
            <person name="Han C."/>
            <person name="Tapia R."/>
            <person name="Gilna P."/>
            <person name="Schmutz J."/>
            <person name="Larimer F."/>
            <person name="Land M."/>
            <person name="Hauser L."/>
            <person name="Kyrpides N."/>
            <person name="Mikhailova N."/>
            <person name="Richardson P."/>
        </authorList>
    </citation>
    <scope>NUCLEOTIDE SEQUENCE [LARGE SCALE GENOMIC DNA]</scope>
    <source>
        <strain>BNC1</strain>
    </source>
</reference>
<proteinExistence type="inferred from homology"/>
<organism>
    <name type="scientific">Chelativorans sp. (strain BNC1)</name>
    <dbReference type="NCBI Taxonomy" id="266779"/>
    <lineage>
        <taxon>Bacteria</taxon>
        <taxon>Pseudomonadati</taxon>
        <taxon>Pseudomonadota</taxon>
        <taxon>Alphaproteobacteria</taxon>
        <taxon>Hyphomicrobiales</taxon>
        <taxon>Phyllobacteriaceae</taxon>
        <taxon>Chelativorans</taxon>
    </lineage>
</organism>
<evidence type="ECO:0000255" key="1">
    <source>
        <dbReference type="HAMAP-Rule" id="MF_00600"/>
    </source>
</evidence>
<sequence length="542" mass="58024">MAAKDVKFHSDARERMLRGVDVLANAVKVTLGPKGRNVVIDKSFGAPRITKDGVTVAKEIELEDKFENMGAQMVREVASKTNDAAGDGTTTATVLTQAIVKEGAKAVASGMNPMDLKRGIDKAVEAIVEELKKNARKVTKNDEIAQVGTISANGDQEIGRFLAQAMEKVGNEGVITVEEAKTAETELEVVEGMQFDRGYLSPYFITNQEKMRVELDEPYLLIHEKKLASLQPLLPVLEAVVQSGKPLLIIAEDVEGEALATLVVNKLRGGLKVAAVKAPGFGDRRKAMLQDIAILTGGTAISEDLGIKLENVTLEMLGRAKKVVIEKENTTIVDGAGSKDEIQGRVNQIKAQIEETTSDYDREKLQERLAKLAGGVAVIRVGGATEVEVKERKDRVDDAMHATRAAVEEGLLPGGGVALLRAAKALDNVTGENEDQKVGISIVRRAIEAPIRQIAENAGAEGSIIVGRVREKPDFGYGWNAQTGEYGDLYQMGVIDPVKVVRAALQDAASVAGLLITTEAMVADRPKKETAPAMPAGAGMDF</sequence>
<name>CH602_CHESB</name>
<comment type="function">
    <text evidence="1">Together with its co-chaperonin GroES, plays an essential role in assisting protein folding. The GroEL-GroES system forms a nano-cage that allows encapsulation of the non-native substrate proteins and provides a physical environment optimized to promote and accelerate protein folding.</text>
</comment>
<comment type="catalytic activity">
    <reaction evidence="1">
        <text>ATP + H2O + a folded polypeptide = ADP + phosphate + an unfolded polypeptide.</text>
        <dbReference type="EC" id="5.6.1.7"/>
    </reaction>
</comment>
<comment type="subunit">
    <text evidence="1">Forms a cylinder of 14 subunits composed of two heptameric rings stacked back-to-back. Interacts with the co-chaperonin GroES.</text>
</comment>
<comment type="subcellular location">
    <subcellularLocation>
        <location evidence="1">Cytoplasm</location>
    </subcellularLocation>
</comment>
<comment type="similarity">
    <text evidence="1">Belongs to the chaperonin (HSP60) family.</text>
</comment>
<feature type="chain" id="PRO_0000256926" description="Chaperonin GroEL 2">
    <location>
        <begin position="1"/>
        <end position="542"/>
    </location>
</feature>
<feature type="binding site" evidence="1">
    <location>
        <begin position="30"/>
        <end position="33"/>
    </location>
    <ligand>
        <name>ATP</name>
        <dbReference type="ChEBI" id="CHEBI:30616"/>
    </ligand>
</feature>
<feature type="binding site" evidence="1">
    <location>
        <position position="51"/>
    </location>
    <ligand>
        <name>ATP</name>
        <dbReference type="ChEBI" id="CHEBI:30616"/>
    </ligand>
</feature>
<feature type="binding site" evidence="1">
    <location>
        <begin position="87"/>
        <end position="91"/>
    </location>
    <ligand>
        <name>ATP</name>
        <dbReference type="ChEBI" id="CHEBI:30616"/>
    </ligand>
</feature>
<feature type="binding site" evidence="1">
    <location>
        <position position="415"/>
    </location>
    <ligand>
        <name>ATP</name>
        <dbReference type="ChEBI" id="CHEBI:30616"/>
    </ligand>
</feature>
<feature type="binding site" evidence="1">
    <location>
        <position position="496"/>
    </location>
    <ligand>
        <name>ATP</name>
        <dbReference type="ChEBI" id="CHEBI:30616"/>
    </ligand>
</feature>
<keyword id="KW-0067">ATP-binding</keyword>
<keyword id="KW-0143">Chaperone</keyword>
<keyword id="KW-0963">Cytoplasm</keyword>
<keyword id="KW-0413">Isomerase</keyword>
<keyword id="KW-0547">Nucleotide-binding</keyword>